<reference key="1">
    <citation type="journal article" date="1992" name="Eur. J. Biochem.">
        <title>Characterization and molecular cloning of neurotoxic phospholipases A2 from Taiwan viper (Vipera russelli formosensis).</title>
        <authorList>
            <person name="Wang Y.-M."/>
            <person name="Lu P.-J."/>
            <person name="Ho C.-L."/>
            <person name="Tsai I.-H."/>
        </authorList>
    </citation>
    <scope>NUCLEOTIDE SEQUENCE [MRNA]</scope>
    <scope>PROTEIN SEQUENCE OF 17-66</scope>
    <source>
        <tissue>Venom</tissue>
        <tissue>Venom gland</tissue>
    </source>
</reference>
<reference key="2">
    <citation type="submission" date="2008-03" db="EMBL/GenBank/DDBJ databases">
        <title>Study of phospholipase A2 genes and their expressions in Thai Russell's viper venom glands.</title>
        <authorList>
            <person name="Sai-Ngam A."/>
            <person name="Phongtananant S."/>
            <person name="Nuchprayoon I."/>
        </authorList>
    </citation>
    <scope>NUCLEOTIDE SEQUENCE [MRNA]</scope>
    <source>
        <tissue>Venom gland</tissue>
    </source>
</reference>
<reference key="3">
    <citation type="journal article" date="1996" name="Toxicon">
        <title>Two types of Russell's viper revealed by variation in phospholipases A2 from venom of the subspecies.</title>
        <authorList>
            <person name="Tsai I.-H."/>
            <person name="Lu P.-J."/>
            <person name="Su J.-C."/>
        </authorList>
    </citation>
    <scope>PROTEIN SEQUENCE OF 17-66</scope>
    <scope>FUNCTION</scope>
    <scope>TOXIC DOSE</scope>
    <source>
        <tissue>Venom</tissue>
    </source>
</reference>
<reference key="4">
    <citation type="journal article" date="2009" name="J. Proteomics">
        <title>Snake venomics of the Siamese Russell's viper (Daboia russelli siamensis) -- relation to pharmacological activities.</title>
        <authorList>
            <person name="Risch M."/>
            <person name="Georgieva D."/>
            <person name="von Bergen M."/>
            <person name="Jehmlich N."/>
            <person name="Genov N."/>
            <person name="Arni R.K."/>
            <person name="Betzel C."/>
        </authorList>
    </citation>
    <scope>PROTEIN SEQUENCE OF 17-28 AND 107-121</scope>
    <source>
        <tissue>Venom</tissue>
    </source>
</reference>
<reference key="5">
    <citation type="journal article" date="2003" name="Acta Crystallogr. D">
        <title>Structure of the heterodimeric neurotoxic complex viperotoxin F (RV-4/RV-7) from the venom of Vipera russelli formosensis at 1.9 A resolution.</title>
        <authorList>
            <person name="Perbandt M."/>
            <person name="Tsai I.-H."/>
            <person name="Fuchs A."/>
            <person name="Banumathi S."/>
            <person name="Rajashankar K.R."/>
            <person name="Georgieva D."/>
            <person name="Kalkura N."/>
            <person name="Singh T.P."/>
            <person name="Genov N."/>
            <person name="Betzel C."/>
        </authorList>
    </citation>
    <scope>X-RAY CRYSTALLOGRAPHY (1.9 ANGSTROMS) OF 17-138</scope>
    <scope>DISULFIDE BONDS</scope>
    <source>
        <tissue>Venom</tissue>
    </source>
</reference>
<accession>P31100</accession>
<accession>B2YHV2</accession>
<feature type="signal peptide" evidence="5 7">
    <location>
        <begin position="1"/>
        <end position="16"/>
    </location>
</feature>
<feature type="chain" id="PRO_0000022978" description="Acidic phospholipase A2 RV-7">
    <location>
        <begin position="17"/>
        <end position="138"/>
    </location>
</feature>
<feature type="active site" evidence="2">
    <location>
        <position position="63"/>
    </location>
</feature>
<feature type="active site" evidence="2">
    <location>
        <position position="105"/>
    </location>
</feature>
<feature type="binding site" evidence="2">
    <location>
        <position position="43"/>
    </location>
    <ligand>
        <name>Ca(2+)</name>
        <dbReference type="ChEBI" id="CHEBI:29108"/>
    </ligand>
</feature>
<feature type="binding site" evidence="2">
    <location>
        <position position="45"/>
    </location>
    <ligand>
        <name>Ca(2+)</name>
        <dbReference type="ChEBI" id="CHEBI:29108"/>
    </ligand>
</feature>
<feature type="binding site" evidence="2">
    <location>
        <position position="47"/>
    </location>
    <ligand>
        <name>Ca(2+)</name>
        <dbReference type="ChEBI" id="CHEBI:29108"/>
    </ligand>
</feature>
<feature type="binding site" evidence="2">
    <location>
        <position position="64"/>
    </location>
    <ligand>
        <name>Ca(2+)</name>
        <dbReference type="ChEBI" id="CHEBI:29108"/>
    </ligand>
</feature>
<feature type="disulfide bond" evidence="6">
    <location>
        <begin position="42"/>
        <end position="131"/>
    </location>
</feature>
<feature type="disulfide bond" evidence="6">
    <location>
        <begin position="44"/>
        <end position="60"/>
    </location>
</feature>
<feature type="disulfide bond" evidence="6">
    <location>
        <begin position="59"/>
        <end position="111"/>
    </location>
</feature>
<feature type="disulfide bond" evidence="6">
    <location>
        <begin position="65"/>
        <end position="138"/>
    </location>
</feature>
<feature type="disulfide bond" evidence="6">
    <location>
        <begin position="66"/>
        <end position="104"/>
    </location>
</feature>
<feature type="disulfide bond" evidence="6">
    <location>
        <begin position="73"/>
        <end position="97"/>
    </location>
</feature>
<feature type="disulfide bond" evidence="6">
    <location>
        <begin position="91"/>
        <end position="102"/>
    </location>
</feature>
<feature type="sequence conflict" description="In Ref. 3; AA sequence." evidence="8" ref="3">
    <original>E</original>
    <variation>Q</variation>
    <location>
        <position position="27"/>
    </location>
</feature>
<feature type="helix" evidence="9">
    <location>
        <begin position="18"/>
        <end position="29"/>
    </location>
</feature>
<feature type="helix" evidence="9">
    <location>
        <begin position="33"/>
        <end position="35"/>
    </location>
</feature>
<feature type="helix" evidence="9">
    <location>
        <begin position="37"/>
        <end position="39"/>
    </location>
</feature>
<feature type="turn" evidence="9">
    <location>
        <begin position="41"/>
        <end position="44"/>
    </location>
</feature>
<feature type="helix" evidence="9">
    <location>
        <begin position="55"/>
        <end position="68"/>
    </location>
</feature>
<feature type="turn" evidence="9">
    <location>
        <begin position="75"/>
        <end position="77"/>
    </location>
</feature>
<feature type="strand" evidence="9">
    <location>
        <begin position="82"/>
        <end position="85"/>
    </location>
</feature>
<feature type="strand" evidence="9">
    <location>
        <begin position="88"/>
        <end position="91"/>
    </location>
</feature>
<feature type="helix" evidence="9">
    <location>
        <begin position="96"/>
        <end position="115"/>
    </location>
</feature>
<feature type="helix" evidence="9">
    <location>
        <begin position="116"/>
        <end position="118"/>
    </location>
</feature>
<feature type="helix" evidence="9">
    <location>
        <begin position="121"/>
        <end position="123"/>
    </location>
</feature>
<feature type="turn" evidence="9">
    <location>
        <begin position="125"/>
        <end position="129"/>
    </location>
</feature>
<keyword id="KW-0002">3D-structure</keyword>
<keyword id="KW-0106">Calcium</keyword>
<keyword id="KW-0903">Direct protein sequencing</keyword>
<keyword id="KW-1015">Disulfide bond</keyword>
<keyword id="KW-0378">Hydrolase</keyword>
<keyword id="KW-0442">Lipid degradation</keyword>
<keyword id="KW-0443">Lipid metabolism</keyword>
<keyword id="KW-0479">Metal-binding</keyword>
<keyword id="KW-0528">Neurotoxin</keyword>
<keyword id="KW-0593">Phospholipase A2 inhibitor</keyword>
<keyword id="KW-0638">Presynaptic neurotoxin</keyword>
<keyword id="KW-0964">Secreted</keyword>
<keyword id="KW-0732">Signal</keyword>
<keyword id="KW-0800">Toxin</keyword>
<comment type="function">
    <text evidence="7">Heterodimer: RV-4/RV-7 targets the presynaptic sites of the neuromuscular junction.</text>
</comment>
<comment type="function">
    <text evidence="7">Monomer: snake venom phospholipase A2 (PLA2) RV-7 that has low enzymatic activity and is not toxic. It inhibits the enzymatic activity of RV-4 in vitro but potentiates its lethal potency and neurotoxicity. It may facilitate the specific binding of RV-4 to its presynaptic binding sites, probably by acting as a chaperone, minimizing distraction and destruction of RV-4 en route to the site of action by reducing non-specific binding to muscle and other organs. PLA2 catalyzes the calcium-dependent hydrolysis of the 2-acyl groups in 3-sn-phosphoglycerides.</text>
</comment>
<comment type="catalytic activity">
    <reaction evidence="3 4">
        <text>a 1,2-diacyl-sn-glycero-3-phosphocholine + H2O = a 1-acyl-sn-glycero-3-phosphocholine + a fatty acid + H(+)</text>
        <dbReference type="Rhea" id="RHEA:15801"/>
        <dbReference type="ChEBI" id="CHEBI:15377"/>
        <dbReference type="ChEBI" id="CHEBI:15378"/>
        <dbReference type="ChEBI" id="CHEBI:28868"/>
        <dbReference type="ChEBI" id="CHEBI:57643"/>
        <dbReference type="ChEBI" id="CHEBI:58168"/>
        <dbReference type="EC" id="3.1.1.4"/>
    </reaction>
</comment>
<comment type="cofactor">
    <cofactor evidence="1">
        <name>Ca(2+)</name>
        <dbReference type="ChEBI" id="CHEBI:29108"/>
    </cofactor>
    <text evidence="1">Binds 1 Ca(2+) ion.</text>
</comment>
<comment type="subunit">
    <text>Heterodimer of a weakly toxic basic protein having phospholipase A2 activity (RV-4) and a non-toxic acidic protein which inhibits its enzymatic activity but potentiates its lethal potency and neurotoxicity (RV-7).</text>
</comment>
<comment type="subcellular location">
    <subcellularLocation>
        <location>Secreted</location>
    </subcellularLocation>
</comment>
<comment type="tissue specificity">
    <text>Expressed by the venom gland.</text>
</comment>
<comment type="similarity">
    <text evidence="8">Belongs to the phospholipase A2 family. Group II subfamily. D49 sub-subfamily.</text>
</comment>
<dbReference type="EC" id="3.1.1.4"/>
<dbReference type="EMBL" id="X68386">
    <property type="protein sequence ID" value="CAA48457.1"/>
    <property type="molecule type" value="mRNA"/>
</dbReference>
<dbReference type="EMBL" id="EU556499">
    <property type="protein sequence ID" value="ACD43466.1"/>
    <property type="molecule type" value="mRNA"/>
</dbReference>
<dbReference type="EMBL" id="EU556501">
    <property type="protein sequence ID" value="ACD43468.1"/>
    <property type="molecule type" value="Genomic_DNA"/>
</dbReference>
<dbReference type="PDB" id="1OQS">
    <property type="method" value="X-ray"/>
    <property type="resolution" value="1.90 A"/>
    <property type="chains" value="A/C/E/G=17-138"/>
</dbReference>
<dbReference type="PDBsum" id="1OQS"/>
<dbReference type="SMR" id="P31100"/>
<dbReference type="EvolutionaryTrace" id="P31100"/>
<dbReference type="GO" id="GO:0005576">
    <property type="term" value="C:extracellular region"/>
    <property type="evidence" value="ECO:0007669"/>
    <property type="project" value="UniProtKB-SubCell"/>
</dbReference>
<dbReference type="GO" id="GO:0005509">
    <property type="term" value="F:calcium ion binding"/>
    <property type="evidence" value="ECO:0007669"/>
    <property type="project" value="InterPro"/>
</dbReference>
<dbReference type="GO" id="GO:0047498">
    <property type="term" value="F:calcium-dependent phospholipase A2 activity"/>
    <property type="evidence" value="ECO:0007669"/>
    <property type="project" value="TreeGrafter"/>
</dbReference>
<dbReference type="GO" id="GO:0019834">
    <property type="term" value="F:phospholipase A2 inhibitor activity"/>
    <property type="evidence" value="ECO:0007669"/>
    <property type="project" value="UniProtKB-KW"/>
</dbReference>
<dbReference type="GO" id="GO:0005543">
    <property type="term" value="F:phospholipid binding"/>
    <property type="evidence" value="ECO:0007669"/>
    <property type="project" value="TreeGrafter"/>
</dbReference>
<dbReference type="GO" id="GO:0090729">
    <property type="term" value="F:toxin activity"/>
    <property type="evidence" value="ECO:0007669"/>
    <property type="project" value="UniProtKB-KW"/>
</dbReference>
<dbReference type="GO" id="GO:0050482">
    <property type="term" value="P:arachidonate secretion"/>
    <property type="evidence" value="ECO:0007669"/>
    <property type="project" value="InterPro"/>
</dbReference>
<dbReference type="GO" id="GO:0016042">
    <property type="term" value="P:lipid catabolic process"/>
    <property type="evidence" value="ECO:0007669"/>
    <property type="project" value="UniProtKB-KW"/>
</dbReference>
<dbReference type="GO" id="GO:0042130">
    <property type="term" value="P:negative regulation of T cell proliferation"/>
    <property type="evidence" value="ECO:0007669"/>
    <property type="project" value="TreeGrafter"/>
</dbReference>
<dbReference type="GO" id="GO:0006644">
    <property type="term" value="P:phospholipid metabolic process"/>
    <property type="evidence" value="ECO:0007669"/>
    <property type="project" value="InterPro"/>
</dbReference>
<dbReference type="CDD" id="cd00125">
    <property type="entry name" value="PLA2c"/>
    <property type="match status" value="1"/>
</dbReference>
<dbReference type="FunFam" id="1.20.90.10:FF:000001">
    <property type="entry name" value="Basic phospholipase A2 homolog"/>
    <property type="match status" value="1"/>
</dbReference>
<dbReference type="Gene3D" id="1.20.90.10">
    <property type="entry name" value="Phospholipase A2 domain"/>
    <property type="match status" value="1"/>
</dbReference>
<dbReference type="InterPro" id="IPR001211">
    <property type="entry name" value="PLipase_A2"/>
</dbReference>
<dbReference type="InterPro" id="IPR033112">
    <property type="entry name" value="PLipase_A2_Asp_AS"/>
</dbReference>
<dbReference type="InterPro" id="IPR016090">
    <property type="entry name" value="PLipase_A2_dom"/>
</dbReference>
<dbReference type="InterPro" id="IPR036444">
    <property type="entry name" value="PLipase_A2_dom_sf"/>
</dbReference>
<dbReference type="InterPro" id="IPR033113">
    <property type="entry name" value="PLipase_A2_His_AS"/>
</dbReference>
<dbReference type="PANTHER" id="PTHR11716">
    <property type="entry name" value="PHOSPHOLIPASE A2 FAMILY MEMBER"/>
    <property type="match status" value="1"/>
</dbReference>
<dbReference type="PANTHER" id="PTHR11716:SF9">
    <property type="entry name" value="PHOSPHOLIPASE A2, MEMBRANE ASSOCIATED"/>
    <property type="match status" value="1"/>
</dbReference>
<dbReference type="Pfam" id="PF00068">
    <property type="entry name" value="Phospholip_A2_1"/>
    <property type="match status" value="1"/>
</dbReference>
<dbReference type="PRINTS" id="PR00389">
    <property type="entry name" value="PHPHLIPASEA2"/>
</dbReference>
<dbReference type="SMART" id="SM00085">
    <property type="entry name" value="PA2c"/>
    <property type="match status" value="1"/>
</dbReference>
<dbReference type="SUPFAM" id="SSF48619">
    <property type="entry name" value="Phospholipase A2, PLA2"/>
    <property type="match status" value="1"/>
</dbReference>
<dbReference type="PROSITE" id="PS00119">
    <property type="entry name" value="PA2_ASP"/>
    <property type="match status" value="1"/>
</dbReference>
<dbReference type="PROSITE" id="PS00118">
    <property type="entry name" value="PA2_HIS"/>
    <property type="match status" value="1"/>
</dbReference>
<organism>
    <name type="scientific">Daboia siamensis</name>
    <name type="common">Eastern Russel's viper</name>
    <name type="synonym">Daboia russelii siamensis</name>
    <dbReference type="NCBI Taxonomy" id="343250"/>
    <lineage>
        <taxon>Eukaryota</taxon>
        <taxon>Metazoa</taxon>
        <taxon>Chordata</taxon>
        <taxon>Craniata</taxon>
        <taxon>Vertebrata</taxon>
        <taxon>Euteleostomi</taxon>
        <taxon>Lepidosauria</taxon>
        <taxon>Squamata</taxon>
        <taxon>Bifurcata</taxon>
        <taxon>Unidentata</taxon>
        <taxon>Episquamata</taxon>
        <taxon>Toxicofera</taxon>
        <taxon>Serpentes</taxon>
        <taxon>Colubroidea</taxon>
        <taxon>Viperidae</taxon>
        <taxon>Viperinae</taxon>
        <taxon>Daboia</taxon>
    </lineage>
</organism>
<name>PA2A7_DABSI</name>
<proteinExistence type="evidence at protein level"/>
<sequence>MRTLWIVAVCLIGVEGNLFQFGEMILEKTGKEVVHSYAIYGCYCGWGGQGRAQDATDRCCFVHDCCYGTVNDCNPKTATYSYSFENGDIVCGDNDLCLRTVCECDRAAAICLGQNVNTYDKNYEYYSISHCTEESEQC</sequence>
<evidence type="ECO:0000250" key="1"/>
<evidence type="ECO:0000250" key="2">
    <source>
        <dbReference type="UniProtKB" id="P14418"/>
    </source>
</evidence>
<evidence type="ECO:0000255" key="3">
    <source>
        <dbReference type="PROSITE-ProRule" id="PRU10035"/>
    </source>
</evidence>
<evidence type="ECO:0000255" key="4">
    <source>
        <dbReference type="PROSITE-ProRule" id="PRU10036"/>
    </source>
</evidence>
<evidence type="ECO:0000269" key="5">
    <source>
    </source>
</evidence>
<evidence type="ECO:0000269" key="6">
    <source>
    </source>
</evidence>
<evidence type="ECO:0000269" key="7">
    <source>
    </source>
</evidence>
<evidence type="ECO:0000305" key="8"/>
<evidence type="ECO:0007829" key="9">
    <source>
        <dbReference type="PDB" id="1OQS"/>
    </source>
</evidence>
<protein>
    <recommendedName>
        <fullName>Acidic phospholipase A2 RV-7</fullName>
        <shortName>svPLA2</shortName>
        <ecNumber>3.1.1.4</ecNumber>
    </recommendedName>
    <alternativeName>
        <fullName>F7</fullName>
    </alternativeName>
    <alternativeName>
        <fullName>Phosphatidylcholine 2-acylhydrolase</fullName>
    </alternativeName>
    <alternativeName>
        <fullName>Phospholipase A2 inhibitor</fullName>
    </alternativeName>
    <alternativeName>
        <fullName>S4</fullName>
    </alternativeName>
    <alternativeName>
        <fullName>Viperotoxin F</fullName>
    </alternativeName>
    <alternativeName>
        <fullName>Viperotoxin non-toxic acidic component</fullName>
    </alternativeName>
</protein>